<protein>
    <recommendedName>
        <fullName>Non-structural protein 5</fullName>
        <shortName>NS5</shortName>
    </recommendedName>
</protein>
<dbReference type="EMBL" id="AF019908">
    <property type="protein sequence ID" value="AAC72011.1"/>
    <property type="molecule type" value="Genomic_RNA"/>
</dbReference>
<dbReference type="EMBL" id="AF052008">
    <property type="protein sequence ID" value="AAC72035.1"/>
    <property type="molecule type" value="Genomic_RNA"/>
</dbReference>
<dbReference type="RefSeq" id="NP_694456.1">
    <property type="nucleotide sequence ID" value="NC_004198.1"/>
</dbReference>
<dbReference type="SMR" id="Q9YIT9"/>
<dbReference type="KEGG" id="vg:995341"/>
<dbReference type="Proteomes" id="UP000000832">
    <property type="component" value="Genome"/>
</dbReference>
<dbReference type="Proteomes" id="UP000888320">
    <property type="component" value="Genome"/>
</dbReference>
<dbReference type="GO" id="GO:0003723">
    <property type="term" value="F:RNA binding"/>
    <property type="evidence" value="ECO:0007669"/>
    <property type="project" value="UniProtKB-KW"/>
</dbReference>
<dbReference type="Gene3D" id="3.30.160.20">
    <property type="match status" value="1"/>
</dbReference>
<dbReference type="InterPro" id="IPR014720">
    <property type="entry name" value="dsRBD_dom"/>
</dbReference>
<dbReference type="InterPro" id="IPR026388">
    <property type="entry name" value="Seadorna_dsRNA-bnd"/>
</dbReference>
<dbReference type="NCBIfam" id="TIGR04238">
    <property type="entry name" value="seadorna_dsRNA"/>
    <property type="match status" value="1"/>
</dbReference>
<dbReference type="Pfam" id="PF00035">
    <property type="entry name" value="dsrm"/>
    <property type="match status" value="1"/>
</dbReference>
<dbReference type="SMART" id="SM00358">
    <property type="entry name" value="DSRM"/>
    <property type="match status" value="1"/>
</dbReference>
<dbReference type="SUPFAM" id="SSF54768">
    <property type="entry name" value="dsRNA-binding domain-like"/>
    <property type="match status" value="1"/>
</dbReference>
<dbReference type="PROSITE" id="PS50137">
    <property type="entry name" value="DS_RBD"/>
    <property type="match status" value="1"/>
</dbReference>
<proteinExistence type="predicted"/>
<feature type="chain" id="PRO_0000404233" description="Non-structural protein 5">
    <location>
        <begin position="1"/>
        <end position="207"/>
    </location>
</feature>
<feature type="domain" description="DRBM" evidence="1">
    <location>
        <begin position="2"/>
        <end position="69"/>
    </location>
</feature>
<organism>
    <name type="scientific">Banna virus</name>
    <name type="common">BAV</name>
    <dbReference type="NCBI Taxonomy" id="77763"/>
    <lineage>
        <taxon>Viruses</taxon>
        <taxon>Riboviria</taxon>
        <taxon>Orthornavirae</taxon>
        <taxon>Duplornaviricota</taxon>
        <taxon>Resentoviricetes</taxon>
        <taxon>Reovirales</taxon>
        <taxon>Sedoreoviridae</taxon>
        <taxon>Seadornavirus</taxon>
        <taxon>Seadornavirus bannaense</taxon>
    </lineage>
</organism>
<reference key="1">
    <citation type="journal article" date="1998" name="J. Gen. Virol.">
        <title>Comparative sequence analysis of American, European and Asian isolates of viruses in the genus Coltivirus.</title>
        <authorList>
            <person name="Attoui H."/>
            <person name="Charrel R.N."/>
            <person name="Billoir F."/>
            <person name="Cantaloube J.F."/>
            <person name="de Micco P."/>
            <person name="de Lamballerie X."/>
        </authorList>
    </citation>
    <scope>NUCLEOTIDE SEQUENCE [GENOMIC RNA]</scope>
    <source>
        <strain>JKT-6423</strain>
        <strain>JKT-6969</strain>
    </source>
</reference>
<sequence>MDPVSVVHSFARSQGLPLNFETVGCEGPSHDPRFVIECKFLDFQHQCTDSSKKRAIQKICVLISNDLKENGLLEEAKTFKPEYKSIAQVYGKFFKRYIAEKESSVITPFKLVNNQILLHDIDELVEYGSSEYMFRHMLLCYIIHKQGIDIKEMCNMKFSPDYIECLSHHLTSTVDIDVHQQDCGNLSVVIFAKDNNIKKQLQIQVSA</sequence>
<name>NS5_BANNV</name>
<evidence type="ECO:0000255" key="1">
    <source>
        <dbReference type="PROSITE-ProRule" id="PRU00266"/>
    </source>
</evidence>
<accession>Q9YIT9</accession>
<keyword id="KW-1185">Reference proteome</keyword>
<keyword id="KW-0694">RNA-binding</keyword>
<gene>
    <name type="primary">Segment-12</name>
    <name type="synonym">S12</name>
</gene>